<accession>Q48DC2</accession>
<evidence type="ECO:0000255" key="1">
    <source>
        <dbReference type="HAMAP-Rule" id="MF_00073"/>
    </source>
</evidence>
<evidence type="ECO:0000256" key="2">
    <source>
        <dbReference type="SAM" id="MobiDB-lite"/>
    </source>
</evidence>
<organism>
    <name type="scientific">Pseudomonas savastanoi pv. phaseolicola (strain 1448A / Race 6)</name>
    <name type="common">Pseudomonas syringae pv. phaseolicola (strain 1448A / Race 6)</name>
    <dbReference type="NCBI Taxonomy" id="264730"/>
    <lineage>
        <taxon>Bacteria</taxon>
        <taxon>Pseudomonadati</taxon>
        <taxon>Pseudomonadota</taxon>
        <taxon>Gammaproteobacteria</taxon>
        <taxon>Pseudomonadales</taxon>
        <taxon>Pseudomonadaceae</taxon>
        <taxon>Pseudomonas</taxon>
    </lineage>
</organism>
<sequence length="165" mass="18620">MISDDTDQFNPRDAKSPEAAKGKSAKRREARQMATQALYQWHMAGHALNEIEAQFRVDNDFSNVDGAYFRELLHGVATNKTEIDTALSPCLDLTIEELDPVELAVLRLSTFELLKRIDVPYRVVINEGIELAKVYGSTDGHKFVNGVLDKLAPRLREVEVKAHKR</sequence>
<proteinExistence type="inferred from homology"/>
<keyword id="KW-0694">RNA-binding</keyword>
<keyword id="KW-0804">Transcription</keyword>
<keyword id="KW-0889">Transcription antitermination</keyword>
<keyword id="KW-0805">Transcription regulation</keyword>
<feature type="chain" id="PRO_0000265565" description="Transcription antitermination protein NusB">
    <location>
        <begin position="1"/>
        <end position="165"/>
    </location>
</feature>
<feature type="region of interest" description="Disordered" evidence="2">
    <location>
        <begin position="1"/>
        <end position="27"/>
    </location>
</feature>
<feature type="compositionally biased region" description="Basic and acidic residues" evidence="2">
    <location>
        <begin position="10"/>
        <end position="21"/>
    </location>
</feature>
<protein>
    <recommendedName>
        <fullName evidence="1">Transcription antitermination protein NusB</fullName>
    </recommendedName>
    <alternativeName>
        <fullName evidence="1">Antitermination factor NusB</fullName>
    </alternativeName>
</protein>
<dbReference type="EMBL" id="CP000058">
    <property type="protein sequence ID" value="AAZ37033.1"/>
    <property type="molecule type" value="Genomic_DNA"/>
</dbReference>
<dbReference type="RefSeq" id="WP_002555426.1">
    <property type="nucleotide sequence ID" value="NC_005773.3"/>
</dbReference>
<dbReference type="SMR" id="Q48DC2"/>
<dbReference type="GeneID" id="69861515"/>
<dbReference type="KEGG" id="psp:PSPPH_4503"/>
<dbReference type="eggNOG" id="COG0781">
    <property type="taxonomic scope" value="Bacteria"/>
</dbReference>
<dbReference type="HOGENOM" id="CLU_087843_4_1_6"/>
<dbReference type="Proteomes" id="UP000000551">
    <property type="component" value="Chromosome"/>
</dbReference>
<dbReference type="GO" id="GO:0005829">
    <property type="term" value="C:cytosol"/>
    <property type="evidence" value="ECO:0007669"/>
    <property type="project" value="TreeGrafter"/>
</dbReference>
<dbReference type="GO" id="GO:0003723">
    <property type="term" value="F:RNA binding"/>
    <property type="evidence" value="ECO:0007669"/>
    <property type="project" value="UniProtKB-UniRule"/>
</dbReference>
<dbReference type="GO" id="GO:0006353">
    <property type="term" value="P:DNA-templated transcription termination"/>
    <property type="evidence" value="ECO:0007669"/>
    <property type="project" value="UniProtKB-UniRule"/>
</dbReference>
<dbReference type="GO" id="GO:0031564">
    <property type="term" value="P:transcription antitermination"/>
    <property type="evidence" value="ECO:0007669"/>
    <property type="project" value="UniProtKB-KW"/>
</dbReference>
<dbReference type="CDD" id="cd00619">
    <property type="entry name" value="Terminator_NusB"/>
    <property type="match status" value="1"/>
</dbReference>
<dbReference type="FunFam" id="1.10.940.10:FF:000001">
    <property type="entry name" value="Transcription antitermination factor NusB"/>
    <property type="match status" value="1"/>
</dbReference>
<dbReference type="Gene3D" id="1.10.940.10">
    <property type="entry name" value="NusB-like"/>
    <property type="match status" value="1"/>
</dbReference>
<dbReference type="HAMAP" id="MF_00073">
    <property type="entry name" value="NusB"/>
    <property type="match status" value="1"/>
</dbReference>
<dbReference type="InterPro" id="IPR035926">
    <property type="entry name" value="NusB-like_sf"/>
</dbReference>
<dbReference type="InterPro" id="IPR011605">
    <property type="entry name" value="NusB_fam"/>
</dbReference>
<dbReference type="InterPro" id="IPR006027">
    <property type="entry name" value="NusB_RsmB_TIM44"/>
</dbReference>
<dbReference type="NCBIfam" id="TIGR01951">
    <property type="entry name" value="nusB"/>
    <property type="match status" value="1"/>
</dbReference>
<dbReference type="PANTHER" id="PTHR11078:SF3">
    <property type="entry name" value="ANTITERMINATION NUSB DOMAIN-CONTAINING PROTEIN"/>
    <property type="match status" value="1"/>
</dbReference>
<dbReference type="PANTHER" id="PTHR11078">
    <property type="entry name" value="N UTILIZATION SUBSTANCE PROTEIN B-RELATED"/>
    <property type="match status" value="1"/>
</dbReference>
<dbReference type="Pfam" id="PF01029">
    <property type="entry name" value="NusB"/>
    <property type="match status" value="1"/>
</dbReference>
<dbReference type="SUPFAM" id="SSF48013">
    <property type="entry name" value="NusB-like"/>
    <property type="match status" value="1"/>
</dbReference>
<gene>
    <name evidence="1" type="primary">nusB</name>
    <name type="ordered locus">PSPPH_4503</name>
</gene>
<comment type="function">
    <text evidence="1">Involved in transcription antitermination. Required for transcription of ribosomal RNA (rRNA) genes. Binds specifically to the boxA antiterminator sequence of the ribosomal RNA (rrn) operons.</text>
</comment>
<comment type="similarity">
    <text evidence="1">Belongs to the NusB family.</text>
</comment>
<reference key="1">
    <citation type="journal article" date="2005" name="J. Bacteriol.">
        <title>Whole-genome sequence analysis of Pseudomonas syringae pv. phaseolicola 1448A reveals divergence among pathovars in genes involved in virulence and transposition.</title>
        <authorList>
            <person name="Joardar V."/>
            <person name="Lindeberg M."/>
            <person name="Jackson R.W."/>
            <person name="Selengut J."/>
            <person name="Dodson R."/>
            <person name="Brinkac L.M."/>
            <person name="Daugherty S.C."/>
            <person name="DeBoy R.T."/>
            <person name="Durkin A.S."/>
            <person name="Gwinn Giglio M."/>
            <person name="Madupu R."/>
            <person name="Nelson W.C."/>
            <person name="Rosovitz M.J."/>
            <person name="Sullivan S.A."/>
            <person name="Crabtree J."/>
            <person name="Creasy T."/>
            <person name="Davidsen T.M."/>
            <person name="Haft D.H."/>
            <person name="Zafar N."/>
            <person name="Zhou L."/>
            <person name="Halpin R."/>
            <person name="Holley T."/>
            <person name="Khouri H.M."/>
            <person name="Feldblyum T.V."/>
            <person name="White O."/>
            <person name="Fraser C.M."/>
            <person name="Chatterjee A.K."/>
            <person name="Cartinhour S."/>
            <person name="Schneider D."/>
            <person name="Mansfield J.W."/>
            <person name="Collmer A."/>
            <person name="Buell R."/>
        </authorList>
    </citation>
    <scope>NUCLEOTIDE SEQUENCE [LARGE SCALE GENOMIC DNA]</scope>
    <source>
        <strain>1448A / Race 6</strain>
    </source>
</reference>
<name>NUSB_PSE14</name>